<sequence length="263" mass="30566">MPRLTVGTKNMLYPLQKTLAVGSCKPEQVPIRSLASVVESSSKILDKSGSDREVDINVSEKIYKWTKAGIEQGKEHFKVGGNKVYFPKARIILLRPNAKHTPYQAKFIVPKSFNKLDLRDYLYHIYGLRAMNITTQLLHGKFNRMNLQTTRFREPQIKKMTIEMEEPFIWPEEPRPDENSFWDSTTPDNMEKYREERLNCLGSDANKPGTAFDGVVGPYERVAQPFIPRFLKREIDNKRERHAAELQRADKLIALNRYIEDLH</sequence>
<organism>
    <name type="scientific">Saccharomyces cerevisiae (strain ATCC 204508 / S288c)</name>
    <name type="common">Baker's yeast</name>
    <dbReference type="NCBI Taxonomy" id="559292"/>
    <lineage>
        <taxon>Eukaryota</taxon>
        <taxon>Fungi</taxon>
        <taxon>Dikarya</taxon>
        <taxon>Ascomycota</taxon>
        <taxon>Saccharomycotina</taxon>
        <taxon>Saccharomycetes</taxon>
        <taxon>Saccharomycetales</taxon>
        <taxon>Saccharomycetaceae</taxon>
        <taxon>Saccharomyces</taxon>
    </lineage>
</organism>
<comment type="function">
    <text evidence="11 12">Component of the mitochondrial ribosome (mitoribosome), a dedicated translation machinery responsible for the synthesis of mitochondrial genome-encoded proteins, including at least some of the essential transmembrane subunits of the mitochondrial respiratory chain. The mitoribosomes are attached to the mitochondrial inner membrane and translation products are cotranslationally integrated into the membrane.</text>
</comment>
<comment type="subunit">
    <text evidence="4 5 6 8">Component of the mitochondrial large ribosomal subunit (mt-LSU). Mature yeast 74S mitochondrial ribosomes consist of a small (37S) and a large (54S) subunit. The 37S small subunit contains a 15S ribosomal RNA (15S mt-rRNA) and 34 different proteins. The 54S large subunit contains a 21S rRNA (21S mt-rRNA) and 46 different proteins. uL23m forms the wall of the exit tunnel (PubMed:2060626, PubMed:24675956, PubMed:9151978). Interacts with the C-terminus of OXA1 (PubMed:14657017).</text>
</comment>
<comment type="interaction">
    <interactant intactId="EBI-15599">
        <id>P32387</id>
    </interactant>
    <interactant intactId="EBI-15595">
        <id>P36534</id>
        <label>MRPL40</label>
    </interactant>
    <organismsDiffer>false</organismsDiffer>
    <experiments>5</experiments>
</comment>
<comment type="subcellular location">
    <subcellularLocation>
        <location evidence="1 3">Mitochondrion</location>
    </subcellularLocation>
    <text evidence="7">Mitoribosomes are tethered to the mitochondrial inner membrane and spatially aligned with the membrane insertion machinery through two distinct membrane contact sites, formed by the 21S rRNA expansion segment 96-ES1 and the inner membrane protein MBA1.</text>
</comment>
<comment type="miscellaneous">
    <text evidence="2">Present with 2200 molecules/cell in log phase SD medium.</text>
</comment>
<comment type="similarity">
    <text evidence="10">Belongs to the universal ribosomal protein uL23 family.</text>
</comment>
<comment type="caution">
    <text evidence="10">It is uncertain whether Met-1 or Met-11 is the initiator.</text>
</comment>
<comment type="sequence caution" evidence="10">
    <conflict type="erroneous initiation">
        <sequence resource="EMBL-CDS" id="AAA34790"/>
    </conflict>
</comment>
<feature type="transit peptide" description="Mitochondrion" evidence="5">
    <location>
        <begin position="1"/>
        <end position="45"/>
    </location>
</feature>
<feature type="chain" id="PRO_0000030488" description="Large ribosomal subunit protein uL23m">
    <location>
        <begin position="46"/>
        <end position="263"/>
    </location>
</feature>
<feature type="sequence conflict" description="In Ref. 4; AA sequence." evidence="10" ref="4">
    <original>R</original>
    <variation>Q</variation>
    <location>
        <position position="52"/>
    </location>
</feature>
<feature type="sequence conflict" description="In Ref. 5; AA sequence." evidence="10" ref="5">
    <original>P</original>
    <variation>Y</variation>
    <location>
        <position position="155"/>
    </location>
</feature>
<feature type="sequence conflict" description="In Ref. 5; AA sequence." evidence="10" ref="5">
    <original>I</original>
    <variation>K</variation>
    <location>
        <position position="253"/>
    </location>
</feature>
<feature type="sequence conflict" description="In Ref. 5; AA sequence." evidence="10" ref="5">
    <original>I</original>
    <variation>K</variation>
    <location>
        <position position="259"/>
    </location>
</feature>
<accession>P32387</accession>
<accession>D6VT37</accession>
<name>RM41_YEAST</name>
<keyword id="KW-0002">3D-structure</keyword>
<keyword id="KW-0903">Direct protein sequencing</keyword>
<keyword id="KW-0496">Mitochondrion</keyword>
<keyword id="KW-1185">Reference proteome</keyword>
<keyword id="KW-0687">Ribonucleoprotein</keyword>
<keyword id="KW-0689">Ribosomal protein</keyword>
<keyword id="KW-0809">Transit peptide</keyword>
<proteinExistence type="evidence at protein level"/>
<protein>
    <recommendedName>
        <fullName evidence="9">Large ribosomal subunit protein uL23m</fullName>
    </recommendedName>
    <alternativeName>
        <fullName>54S ribosomal protein L41, mitochondrial</fullName>
    </alternativeName>
    <alternativeName>
        <fullName>YmL41</fullName>
    </alternativeName>
</protein>
<evidence type="ECO:0000269" key="1">
    <source>
    </source>
</evidence>
<evidence type="ECO:0000269" key="2">
    <source>
    </source>
</evidence>
<evidence type="ECO:0000269" key="3">
    <source>
    </source>
</evidence>
<evidence type="ECO:0000269" key="4">
    <source>
    </source>
</evidence>
<evidence type="ECO:0000269" key="5">
    <source>
    </source>
</evidence>
<evidence type="ECO:0000269" key="6">
    <source>
    </source>
</evidence>
<evidence type="ECO:0000269" key="7">
    <source>
    </source>
</evidence>
<evidence type="ECO:0000269" key="8">
    <source>
    </source>
</evidence>
<evidence type="ECO:0000303" key="9">
    <source>
    </source>
</evidence>
<evidence type="ECO:0000305" key="10"/>
<evidence type="ECO:0000305" key="11">
    <source>
    </source>
</evidence>
<evidence type="ECO:0000305" key="12">
    <source>
    </source>
</evidence>
<dbReference type="EMBL" id="M81696">
    <property type="protein sequence ID" value="AAA34789.1"/>
    <property type="molecule type" value="Genomic_DNA"/>
</dbReference>
<dbReference type="EMBL" id="M81696">
    <property type="protein sequence ID" value="AAA34790.1"/>
    <property type="status" value="ALT_INIT"/>
    <property type="molecule type" value="Genomic_DNA"/>
</dbReference>
<dbReference type="EMBL" id="U32274">
    <property type="protein sequence ID" value="AAB64845.1"/>
    <property type="molecule type" value="Genomic_DNA"/>
</dbReference>
<dbReference type="EMBL" id="BK006938">
    <property type="protein sequence ID" value="DAA12247.1"/>
    <property type="molecule type" value="Genomic_DNA"/>
</dbReference>
<dbReference type="PIR" id="B42105">
    <property type="entry name" value="B42105"/>
</dbReference>
<dbReference type="RefSeq" id="NP_010693.3">
    <property type="nucleotide sequence ID" value="NM_001180713.3"/>
</dbReference>
<dbReference type="PDB" id="3J6B">
    <property type="method" value="EM"/>
    <property type="resolution" value="3.20 A"/>
    <property type="chains" value="P=1-263"/>
</dbReference>
<dbReference type="PDB" id="5MRC">
    <property type="method" value="EM"/>
    <property type="resolution" value="3.25 A"/>
    <property type="chains" value="P=55-261"/>
</dbReference>
<dbReference type="PDB" id="5MRE">
    <property type="method" value="EM"/>
    <property type="resolution" value="3.75 A"/>
    <property type="chains" value="P=55-261"/>
</dbReference>
<dbReference type="PDB" id="5MRF">
    <property type="method" value="EM"/>
    <property type="resolution" value="4.97 A"/>
    <property type="chains" value="P=55-261"/>
</dbReference>
<dbReference type="PDBsum" id="3J6B"/>
<dbReference type="PDBsum" id="5MRC"/>
<dbReference type="PDBsum" id="5MRE"/>
<dbReference type="PDBsum" id="5MRF"/>
<dbReference type="EMDB" id="EMD-3551"/>
<dbReference type="EMDB" id="EMD-3552"/>
<dbReference type="EMDB" id="EMD-3553"/>
<dbReference type="SMR" id="P32387"/>
<dbReference type="BioGRID" id="32465">
    <property type="interactions" value="277"/>
</dbReference>
<dbReference type="ComplexPortal" id="CPX-1602">
    <property type="entry name" value="54S mitochondrial large ribosomal subunit"/>
</dbReference>
<dbReference type="DIP" id="DIP-6703N"/>
<dbReference type="FunCoup" id="P32387">
    <property type="interactions" value="354"/>
</dbReference>
<dbReference type="IntAct" id="P32387">
    <property type="interactions" value="61"/>
</dbReference>
<dbReference type="MINT" id="P32387"/>
<dbReference type="STRING" id="4932.YDR405W"/>
<dbReference type="iPTMnet" id="P32387"/>
<dbReference type="PaxDb" id="4932-YDR405W"/>
<dbReference type="PeptideAtlas" id="P32387"/>
<dbReference type="EnsemblFungi" id="YDR405W_mRNA">
    <property type="protein sequence ID" value="YDR405W"/>
    <property type="gene ID" value="YDR405W"/>
</dbReference>
<dbReference type="GeneID" id="852014"/>
<dbReference type="KEGG" id="sce:YDR405W"/>
<dbReference type="AGR" id="SGD:S000002813"/>
<dbReference type="SGD" id="S000002813">
    <property type="gene designation" value="MRP20"/>
</dbReference>
<dbReference type="VEuPathDB" id="FungiDB:YDR405W"/>
<dbReference type="eggNOG" id="KOG4089">
    <property type="taxonomic scope" value="Eukaryota"/>
</dbReference>
<dbReference type="GeneTree" id="ENSGT00390000007739"/>
<dbReference type="HOGENOM" id="CLU_084850_0_0_1"/>
<dbReference type="InParanoid" id="P32387"/>
<dbReference type="OMA" id="YLFHVYG"/>
<dbReference type="OrthoDB" id="275582at2759"/>
<dbReference type="BioCyc" id="YEAST:G3O-29949-MONOMER"/>
<dbReference type="BioGRID-ORCS" id="852014">
    <property type="hits" value="6 hits in 10 CRISPR screens"/>
</dbReference>
<dbReference type="PRO" id="PR:P32387"/>
<dbReference type="Proteomes" id="UP000002311">
    <property type="component" value="Chromosome IV"/>
</dbReference>
<dbReference type="RNAct" id="P32387">
    <property type="molecule type" value="protein"/>
</dbReference>
<dbReference type="GO" id="GO:0005743">
    <property type="term" value="C:mitochondrial inner membrane"/>
    <property type="evidence" value="ECO:0000303"/>
    <property type="project" value="ComplexPortal"/>
</dbReference>
<dbReference type="GO" id="GO:0005762">
    <property type="term" value="C:mitochondrial large ribosomal subunit"/>
    <property type="evidence" value="ECO:0000314"/>
    <property type="project" value="SGD"/>
</dbReference>
<dbReference type="GO" id="GO:0005739">
    <property type="term" value="C:mitochondrion"/>
    <property type="evidence" value="ECO:0007005"/>
    <property type="project" value="SGD"/>
</dbReference>
<dbReference type="GO" id="GO:0003735">
    <property type="term" value="F:structural constituent of ribosome"/>
    <property type="evidence" value="ECO:0000314"/>
    <property type="project" value="SGD"/>
</dbReference>
<dbReference type="GO" id="GO:0032543">
    <property type="term" value="P:mitochondrial translation"/>
    <property type="evidence" value="ECO:0000315"/>
    <property type="project" value="SGD"/>
</dbReference>
<dbReference type="FunFam" id="3.30.70.330:FF:000614">
    <property type="entry name" value="Mrp20p"/>
    <property type="match status" value="1"/>
</dbReference>
<dbReference type="Gene3D" id="3.30.70.330">
    <property type="match status" value="1"/>
</dbReference>
<dbReference type="InterPro" id="IPR012677">
    <property type="entry name" value="Nucleotide-bd_a/b_plait_sf"/>
</dbReference>
<dbReference type="InterPro" id="IPR013025">
    <property type="entry name" value="Ribosomal_uL23-like"/>
</dbReference>
<dbReference type="InterPro" id="IPR012678">
    <property type="entry name" value="Ribosomal_uL23/eL15/eS24_sf"/>
</dbReference>
<dbReference type="PANTHER" id="PTHR12059:SF5">
    <property type="entry name" value="LARGE RIBOSOMAL SUBUNIT PROTEIN UL23M"/>
    <property type="match status" value="1"/>
</dbReference>
<dbReference type="PANTHER" id="PTHR12059">
    <property type="entry name" value="RIBOSOMAL PROTEIN L23-RELATED"/>
    <property type="match status" value="1"/>
</dbReference>
<dbReference type="Pfam" id="PF00276">
    <property type="entry name" value="Ribosomal_L23"/>
    <property type="match status" value="1"/>
</dbReference>
<dbReference type="SUPFAM" id="SSF54189">
    <property type="entry name" value="Ribosomal proteins S24e, L23 and L15e"/>
    <property type="match status" value="1"/>
</dbReference>
<gene>
    <name type="primary">MRP20</name>
    <name type="synonym">MRPL41</name>
    <name type="ordered locus">YDR405W</name>
    <name type="ORF">D9509.23</name>
</gene>
<reference key="1">
    <citation type="journal article" date="1992" name="J. Biol. Chem.">
        <title>Structure and function of MRP20 and MRP49, the nuclear genes for two proteins of the 54 S subunit of the yeast mitochondrial ribosome.</title>
        <authorList>
            <person name="Fearon K."/>
            <person name="Mason T.L."/>
        </authorList>
    </citation>
    <scope>NUCLEOTIDE SEQUENCE [GENOMIC DNA]</scope>
</reference>
<reference key="2">
    <citation type="journal article" date="1997" name="Nature">
        <title>The nucleotide sequence of Saccharomyces cerevisiae chromosome IV.</title>
        <authorList>
            <person name="Jacq C."/>
            <person name="Alt-Moerbe J."/>
            <person name="Andre B."/>
            <person name="Arnold W."/>
            <person name="Bahr A."/>
            <person name="Ballesta J.P.G."/>
            <person name="Bargues M."/>
            <person name="Baron L."/>
            <person name="Becker A."/>
            <person name="Biteau N."/>
            <person name="Bloecker H."/>
            <person name="Blugeon C."/>
            <person name="Boskovic J."/>
            <person name="Brandt P."/>
            <person name="Brueckner M."/>
            <person name="Buitrago M.J."/>
            <person name="Coster F."/>
            <person name="Delaveau T."/>
            <person name="del Rey F."/>
            <person name="Dujon B."/>
            <person name="Eide L.G."/>
            <person name="Garcia-Cantalejo J.M."/>
            <person name="Goffeau A."/>
            <person name="Gomez-Peris A."/>
            <person name="Granotier C."/>
            <person name="Hanemann V."/>
            <person name="Hankeln T."/>
            <person name="Hoheisel J.D."/>
            <person name="Jaeger W."/>
            <person name="Jimenez A."/>
            <person name="Jonniaux J.-L."/>
            <person name="Kraemer C."/>
            <person name="Kuester H."/>
            <person name="Laamanen P."/>
            <person name="Legros Y."/>
            <person name="Louis E.J."/>
            <person name="Moeller-Rieker S."/>
            <person name="Monnet A."/>
            <person name="Moro M."/>
            <person name="Mueller-Auer S."/>
            <person name="Nussbaumer B."/>
            <person name="Paricio N."/>
            <person name="Paulin L."/>
            <person name="Perea J."/>
            <person name="Perez-Alonso M."/>
            <person name="Perez-Ortin J.E."/>
            <person name="Pohl T.M."/>
            <person name="Prydz H."/>
            <person name="Purnelle B."/>
            <person name="Rasmussen S.W."/>
            <person name="Remacha M.A."/>
            <person name="Revuelta J.L."/>
            <person name="Rieger M."/>
            <person name="Salom D."/>
            <person name="Saluz H.P."/>
            <person name="Saiz J.E."/>
            <person name="Saren A.-M."/>
            <person name="Schaefer M."/>
            <person name="Scharfe M."/>
            <person name="Schmidt E.R."/>
            <person name="Schneider C."/>
            <person name="Scholler P."/>
            <person name="Schwarz S."/>
            <person name="Soler-Mira A."/>
            <person name="Urrestarazu L.A."/>
            <person name="Verhasselt P."/>
            <person name="Vissers S."/>
            <person name="Voet M."/>
            <person name="Volckaert G."/>
            <person name="Wagner G."/>
            <person name="Wambutt R."/>
            <person name="Wedler E."/>
            <person name="Wedler H."/>
            <person name="Woelfl S."/>
            <person name="Harris D.E."/>
            <person name="Bowman S."/>
            <person name="Brown D."/>
            <person name="Churcher C.M."/>
            <person name="Connor R."/>
            <person name="Dedman K."/>
            <person name="Gentles S."/>
            <person name="Hamlin N."/>
            <person name="Hunt S."/>
            <person name="Jones L."/>
            <person name="McDonald S."/>
            <person name="Murphy L.D."/>
            <person name="Niblett D."/>
            <person name="Odell C."/>
            <person name="Oliver K."/>
            <person name="Rajandream M.A."/>
            <person name="Richards C."/>
            <person name="Shore L."/>
            <person name="Walsh S.V."/>
            <person name="Barrell B.G."/>
            <person name="Dietrich F.S."/>
            <person name="Mulligan J.T."/>
            <person name="Allen E."/>
            <person name="Araujo R."/>
            <person name="Aviles E."/>
            <person name="Berno A."/>
            <person name="Carpenter J."/>
            <person name="Chen E."/>
            <person name="Cherry J.M."/>
            <person name="Chung E."/>
            <person name="Duncan M."/>
            <person name="Hunicke-Smith S."/>
            <person name="Hyman R.W."/>
            <person name="Komp C."/>
            <person name="Lashkari D."/>
            <person name="Lew H."/>
            <person name="Lin D."/>
            <person name="Mosedale D."/>
            <person name="Nakahara K."/>
            <person name="Namath A."/>
            <person name="Oefner P."/>
            <person name="Oh C."/>
            <person name="Petel F.X."/>
            <person name="Roberts D."/>
            <person name="Schramm S."/>
            <person name="Schroeder M."/>
            <person name="Shogren T."/>
            <person name="Shroff N."/>
            <person name="Winant A."/>
            <person name="Yelton M.A."/>
            <person name="Botstein D."/>
            <person name="Davis R.W."/>
            <person name="Johnston M."/>
            <person name="Andrews S."/>
            <person name="Brinkman R."/>
            <person name="Cooper J."/>
            <person name="Ding H."/>
            <person name="Du Z."/>
            <person name="Favello A."/>
            <person name="Fulton L."/>
            <person name="Gattung S."/>
            <person name="Greco T."/>
            <person name="Hallsworth K."/>
            <person name="Hawkins J."/>
            <person name="Hillier L.W."/>
            <person name="Jier M."/>
            <person name="Johnson D."/>
            <person name="Johnston L."/>
            <person name="Kirsten J."/>
            <person name="Kucaba T."/>
            <person name="Langston Y."/>
            <person name="Latreille P."/>
            <person name="Le T."/>
            <person name="Mardis E."/>
            <person name="Menezes S."/>
            <person name="Miller N."/>
            <person name="Nhan M."/>
            <person name="Pauley A."/>
            <person name="Peluso D."/>
            <person name="Rifkin L."/>
            <person name="Riles L."/>
            <person name="Taich A."/>
            <person name="Trevaskis E."/>
            <person name="Vignati D."/>
            <person name="Wilcox L."/>
            <person name="Wohldman P."/>
            <person name="Vaudin M."/>
            <person name="Wilson R."/>
            <person name="Waterston R."/>
            <person name="Albermann K."/>
            <person name="Hani J."/>
            <person name="Heumann K."/>
            <person name="Kleine K."/>
            <person name="Mewes H.-W."/>
            <person name="Zollner A."/>
            <person name="Zaccaria P."/>
        </authorList>
    </citation>
    <scope>NUCLEOTIDE SEQUENCE [LARGE SCALE GENOMIC DNA]</scope>
    <source>
        <strain>ATCC 204508 / S288c</strain>
    </source>
</reference>
<reference key="3">
    <citation type="journal article" date="2014" name="G3 (Bethesda)">
        <title>The reference genome sequence of Saccharomyces cerevisiae: Then and now.</title>
        <authorList>
            <person name="Engel S.R."/>
            <person name="Dietrich F.S."/>
            <person name="Fisk D.G."/>
            <person name="Binkley G."/>
            <person name="Balakrishnan R."/>
            <person name="Costanzo M.C."/>
            <person name="Dwight S.S."/>
            <person name="Hitz B.C."/>
            <person name="Karra K."/>
            <person name="Nash R.S."/>
            <person name="Weng S."/>
            <person name="Wong E.D."/>
            <person name="Lloyd P."/>
            <person name="Skrzypek M.S."/>
            <person name="Miyasato S.R."/>
            <person name="Simison M."/>
            <person name="Cherry J.M."/>
        </authorList>
    </citation>
    <scope>GENOME REANNOTATION</scope>
    <source>
        <strain>ATCC 204508 / S288c</strain>
    </source>
</reference>
<reference key="4">
    <citation type="journal article" date="1991" name="FEBS Lett.">
        <title>Extended N-terminal sequencing of proteins of the large ribosomal subunit from yeast mitochondria.</title>
        <authorList>
            <person name="Grohmann L."/>
            <person name="Graack H.-R."/>
            <person name="Kruft V."/>
            <person name="Choli T."/>
            <person name="Goldschmidt-Reisin S."/>
            <person name="Kitakawa M."/>
        </authorList>
    </citation>
    <scope>PROTEIN SEQUENCE OF 46-58</scope>
    <scope>SUBUNIT</scope>
    <source>
        <strain>07173</strain>
    </source>
</reference>
<reference key="5">
    <citation type="journal article" date="1997" name="Eur. J. Biochem.">
        <title>Identification and characterization of the genes for mitochondrial ribosomal proteins of Saccharomyces cerevisiae.</title>
        <authorList>
            <person name="Kitakawa M."/>
            <person name="Graack H.-R."/>
            <person name="Grohmann L."/>
            <person name="Goldschmidt-Reisin S."/>
            <person name="Herfurth E."/>
            <person name="Wittmann-Liebold B."/>
            <person name="Nishimura T."/>
            <person name="Isono K."/>
        </authorList>
    </citation>
    <scope>PROTEIN SEQUENCE OF 142-156 AND 252-263</scope>
    <scope>SUBUNIT</scope>
    <source>
        <strain>07173</strain>
    </source>
</reference>
<reference key="6">
    <citation type="journal article" date="2003" name="EMBO J.">
        <title>Yeast Oxa1 interacts with mitochondrial ribosomes: the importance of the C-terminal region of Oxa1.</title>
        <authorList>
            <person name="Jia L."/>
            <person name="Dienhart M."/>
            <person name="Schramp M."/>
            <person name="McCauley M."/>
            <person name="Hell K."/>
            <person name="Stuart R.A."/>
        </authorList>
    </citation>
    <scope>INTERACTION WITH OXA1</scope>
</reference>
<reference key="7">
    <citation type="journal article" date="2003" name="Nature">
        <title>Global analysis of protein localization in budding yeast.</title>
        <authorList>
            <person name="Huh W.-K."/>
            <person name="Falvo J.V."/>
            <person name="Gerke L.C."/>
            <person name="Carroll A.S."/>
            <person name="Howson R.W."/>
            <person name="Weissman J.S."/>
            <person name="O'Shea E.K."/>
        </authorList>
    </citation>
    <scope>SUBCELLULAR LOCATION [LARGE SCALE ANALYSIS]</scope>
</reference>
<reference key="8">
    <citation type="journal article" date="2003" name="Nature">
        <title>Global analysis of protein expression in yeast.</title>
        <authorList>
            <person name="Ghaemmaghami S."/>
            <person name="Huh W.-K."/>
            <person name="Bower K."/>
            <person name="Howson R.W."/>
            <person name="Belle A."/>
            <person name="Dephoure N."/>
            <person name="O'Shea E.K."/>
            <person name="Weissman J.S."/>
        </authorList>
    </citation>
    <scope>LEVEL OF PROTEIN EXPRESSION [LARGE SCALE ANALYSIS]</scope>
</reference>
<reference key="9">
    <citation type="journal article" date="2003" name="Proc. Natl. Acad. Sci. U.S.A.">
        <title>The proteome of Saccharomyces cerevisiae mitochondria.</title>
        <authorList>
            <person name="Sickmann A."/>
            <person name="Reinders J."/>
            <person name="Wagner Y."/>
            <person name="Joppich C."/>
            <person name="Zahedi R.P."/>
            <person name="Meyer H.E."/>
            <person name="Schoenfisch B."/>
            <person name="Perschil I."/>
            <person name="Chacinska A."/>
            <person name="Guiard B."/>
            <person name="Rehling P."/>
            <person name="Pfanner N."/>
            <person name="Meisinger C."/>
        </authorList>
    </citation>
    <scope>SUBCELLULAR LOCATION [LARGE SCALE ANALYSIS]</scope>
    <source>
        <strain>ATCC 76625 / YPH499</strain>
    </source>
</reference>
<reference key="10">
    <citation type="journal article" date="2015" name="Nat. Commun.">
        <title>Organization of the mitochondrial translation machinery studied in situ by cryoelectron tomography.</title>
        <authorList>
            <person name="Pfeffer S."/>
            <person name="Woellhaf M.W."/>
            <person name="Herrmann J.M."/>
            <person name="Forster F."/>
        </authorList>
    </citation>
    <scope>SUBCELLULAR LOCATION</scope>
</reference>
<reference key="11">
    <citation type="journal article" date="2014" name="Science">
        <title>Structure of the yeast mitochondrial large ribosomal subunit.</title>
        <authorList>
            <person name="Amunts A."/>
            <person name="Brown A."/>
            <person name="Bai X.C."/>
            <person name="Llacer J.L."/>
            <person name="Hussain T."/>
            <person name="Emsley P."/>
            <person name="Long F."/>
            <person name="Murshudov G."/>
            <person name="Scheres S.H."/>
            <person name="Ramakrishnan V."/>
        </authorList>
    </citation>
    <scope>STRUCTURE BY ELECTRON MICROSCOPY (3.20 ANGSTROMS)</scope>
    <scope>SUBUNIT</scope>
</reference>